<sequence>MENIHDLWNRVLGEIEKKISKPSFETWLKSTKAHSLRGDTLVIIAPNEFARDWLDSRYSRLIAETIYDITGEELLIKFITPPNQSEDDFEFQRSSKKHRKPYEESTDFPQSMLNPKYTFDTFVIGSGNRFAHAASLAVAEAPAKAYNPLFIYGGVGLGKTHLMHAIGHYVIEHNPSAKVVYLSSEKFTNEFINAIRDNRPDDFRNKYRNVDVLLIDDIQFLAGKEQTQEEFFHTFNTLHEESKQIVISSDRPPKEIPTLEDRLRSRFEWGLITDITPPDLETRIAILRKKAKAEGFDIPNEVMLYIANQIDSNIRELEGALIRVVAYSSLINKEITADLAAEALKDIIPSTKPKVITIQDIQRVVGQHFNIKLEDFKAKKRTKSVAFPRQIAMYLSRELTDCSLPKIGDEFGGRDHTTVIHAHEKISKLLQTDAQLQKHIKEIEEKLKQL</sequence>
<comment type="function">
    <text evidence="1">Plays an essential role in the initiation and regulation of chromosomal replication. ATP-DnaA binds to the origin of replication (oriC) to initiate formation of the DNA replication initiation complex once per cell cycle. Binds the DnaA box (a 9 base pair repeat at the origin) and separates the double-stranded (ds)DNA. Forms a right-handed helical filament on oriC DNA; dsDNA binds to the exterior of the filament while single-stranded (ss)DNA is stabiized in the filament's interior. The ATP-DnaA-oriC complex binds and stabilizes one strand of the AT-rich DNA unwinding element (DUE), permitting loading of DNA polymerase. After initiation quickly degrades to an ADP-DnaA complex that is not apt for DNA replication. Binds acidic phospholipids.</text>
</comment>
<comment type="subunit">
    <text evidence="1">Oligomerizes as a right-handed, spiral filament on DNA at oriC.</text>
</comment>
<comment type="subcellular location">
    <subcellularLocation>
        <location evidence="1">Cytoplasm</location>
    </subcellularLocation>
</comment>
<comment type="domain">
    <text evidence="1">Domain I is involved in oligomerization and binding regulators, domain II is flexibile and of varying length in different bacteria, domain III forms the AAA+ region, while domain IV binds dsDNA.</text>
</comment>
<comment type="similarity">
    <text evidence="1">Belongs to the DnaA family.</text>
</comment>
<name>DNAA_GEOSW</name>
<gene>
    <name evidence="1" type="primary">dnaA</name>
    <name type="ordered locus">GWCH70_0001</name>
</gene>
<feature type="chain" id="PRO_1000205654" description="Chromosomal replication initiator protein DnaA">
    <location>
        <begin position="1"/>
        <end position="450"/>
    </location>
</feature>
<feature type="region of interest" description="Domain I, interacts with DnaA modulators" evidence="1">
    <location>
        <begin position="1"/>
        <end position="79"/>
    </location>
</feature>
<feature type="region of interest" description="Domain II" evidence="1">
    <location>
        <begin position="79"/>
        <end position="111"/>
    </location>
</feature>
<feature type="region of interest" description="Domain III, AAA+ region" evidence="1">
    <location>
        <begin position="112"/>
        <end position="328"/>
    </location>
</feature>
<feature type="region of interest" description="Domain IV, binds dsDNA" evidence="1">
    <location>
        <begin position="329"/>
        <end position="450"/>
    </location>
</feature>
<feature type="binding site" evidence="1">
    <location>
        <position position="156"/>
    </location>
    <ligand>
        <name>ATP</name>
        <dbReference type="ChEBI" id="CHEBI:30616"/>
    </ligand>
</feature>
<feature type="binding site" evidence="1">
    <location>
        <position position="158"/>
    </location>
    <ligand>
        <name>ATP</name>
        <dbReference type="ChEBI" id="CHEBI:30616"/>
    </ligand>
</feature>
<feature type="binding site" evidence="1">
    <location>
        <position position="159"/>
    </location>
    <ligand>
        <name>ATP</name>
        <dbReference type="ChEBI" id="CHEBI:30616"/>
    </ligand>
</feature>
<feature type="binding site" evidence="1">
    <location>
        <position position="160"/>
    </location>
    <ligand>
        <name>ATP</name>
        <dbReference type="ChEBI" id="CHEBI:30616"/>
    </ligand>
</feature>
<dbReference type="EMBL" id="CP001638">
    <property type="protein sequence ID" value="ACS22943.1"/>
    <property type="molecule type" value="Genomic_DNA"/>
</dbReference>
<dbReference type="SMR" id="C5D327"/>
<dbReference type="STRING" id="471223.GWCH70_0001"/>
<dbReference type="KEGG" id="gwc:GWCH70_0001"/>
<dbReference type="eggNOG" id="COG0593">
    <property type="taxonomic scope" value="Bacteria"/>
</dbReference>
<dbReference type="HOGENOM" id="CLU_026910_3_1_9"/>
<dbReference type="OrthoDB" id="9807019at2"/>
<dbReference type="GO" id="GO:0005737">
    <property type="term" value="C:cytoplasm"/>
    <property type="evidence" value="ECO:0007669"/>
    <property type="project" value="UniProtKB-SubCell"/>
</dbReference>
<dbReference type="GO" id="GO:0005886">
    <property type="term" value="C:plasma membrane"/>
    <property type="evidence" value="ECO:0007669"/>
    <property type="project" value="TreeGrafter"/>
</dbReference>
<dbReference type="GO" id="GO:0005524">
    <property type="term" value="F:ATP binding"/>
    <property type="evidence" value="ECO:0007669"/>
    <property type="project" value="UniProtKB-UniRule"/>
</dbReference>
<dbReference type="GO" id="GO:0016887">
    <property type="term" value="F:ATP hydrolysis activity"/>
    <property type="evidence" value="ECO:0007669"/>
    <property type="project" value="InterPro"/>
</dbReference>
<dbReference type="GO" id="GO:0003688">
    <property type="term" value="F:DNA replication origin binding"/>
    <property type="evidence" value="ECO:0007669"/>
    <property type="project" value="UniProtKB-UniRule"/>
</dbReference>
<dbReference type="GO" id="GO:0008289">
    <property type="term" value="F:lipid binding"/>
    <property type="evidence" value="ECO:0007669"/>
    <property type="project" value="UniProtKB-KW"/>
</dbReference>
<dbReference type="GO" id="GO:0006270">
    <property type="term" value="P:DNA replication initiation"/>
    <property type="evidence" value="ECO:0007669"/>
    <property type="project" value="UniProtKB-UniRule"/>
</dbReference>
<dbReference type="GO" id="GO:0006275">
    <property type="term" value="P:regulation of DNA replication"/>
    <property type="evidence" value="ECO:0007669"/>
    <property type="project" value="UniProtKB-UniRule"/>
</dbReference>
<dbReference type="CDD" id="cd00009">
    <property type="entry name" value="AAA"/>
    <property type="match status" value="1"/>
</dbReference>
<dbReference type="CDD" id="cd06571">
    <property type="entry name" value="Bac_DnaA_C"/>
    <property type="match status" value="1"/>
</dbReference>
<dbReference type="FunFam" id="1.10.1750.10:FF:000003">
    <property type="entry name" value="Chromosomal replication initiator protein DnaA"/>
    <property type="match status" value="1"/>
</dbReference>
<dbReference type="FunFam" id="1.10.8.60:FF:000003">
    <property type="entry name" value="Chromosomal replication initiator protein DnaA"/>
    <property type="match status" value="1"/>
</dbReference>
<dbReference type="FunFam" id="3.40.50.300:FF:000150">
    <property type="entry name" value="Chromosomal replication initiator protein DnaA"/>
    <property type="match status" value="1"/>
</dbReference>
<dbReference type="Gene3D" id="1.10.1750.10">
    <property type="match status" value="1"/>
</dbReference>
<dbReference type="Gene3D" id="1.10.8.60">
    <property type="match status" value="1"/>
</dbReference>
<dbReference type="Gene3D" id="3.30.300.180">
    <property type="match status" value="1"/>
</dbReference>
<dbReference type="Gene3D" id="3.40.50.300">
    <property type="entry name" value="P-loop containing nucleotide triphosphate hydrolases"/>
    <property type="match status" value="1"/>
</dbReference>
<dbReference type="HAMAP" id="MF_00377">
    <property type="entry name" value="DnaA_bact"/>
    <property type="match status" value="1"/>
</dbReference>
<dbReference type="InterPro" id="IPR003593">
    <property type="entry name" value="AAA+_ATPase"/>
</dbReference>
<dbReference type="InterPro" id="IPR001957">
    <property type="entry name" value="Chromosome_initiator_DnaA"/>
</dbReference>
<dbReference type="InterPro" id="IPR020591">
    <property type="entry name" value="Chromosome_initiator_DnaA-like"/>
</dbReference>
<dbReference type="InterPro" id="IPR018312">
    <property type="entry name" value="Chromosome_initiator_DnaA_CS"/>
</dbReference>
<dbReference type="InterPro" id="IPR013159">
    <property type="entry name" value="DnaA_C"/>
</dbReference>
<dbReference type="InterPro" id="IPR013317">
    <property type="entry name" value="DnaA_dom"/>
</dbReference>
<dbReference type="InterPro" id="IPR024633">
    <property type="entry name" value="DnaA_N_dom"/>
</dbReference>
<dbReference type="InterPro" id="IPR038454">
    <property type="entry name" value="DnaA_N_sf"/>
</dbReference>
<dbReference type="InterPro" id="IPR027417">
    <property type="entry name" value="P-loop_NTPase"/>
</dbReference>
<dbReference type="InterPro" id="IPR010921">
    <property type="entry name" value="Trp_repressor/repl_initiator"/>
</dbReference>
<dbReference type="NCBIfam" id="TIGR00362">
    <property type="entry name" value="DnaA"/>
    <property type="match status" value="1"/>
</dbReference>
<dbReference type="NCBIfam" id="NF010686">
    <property type="entry name" value="PRK14086.1"/>
    <property type="match status" value="1"/>
</dbReference>
<dbReference type="PANTHER" id="PTHR30050">
    <property type="entry name" value="CHROMOSOMAL REPLICATION INITIATOR PROTEIN DNAA"/>
    <property type="match status" value="1"/>
</dbReference>
<dbReference type="PANTHER" id="PTHR30050:SF2">
    <property type="entry name" value="CHROMOSOMAL REPLICATION INITIATOR PROTEIN DNAA"/>
    <property type="match status" value="1"/>
</dbReference>
<dbReference type="Pfam" id="PF00308">
    <property type="entry name" value="Bac_DnaA"/>
    <property type="match status" value="1"/>
</dbReference>
<dbReference type="Pfam" id="PF08299">
    <property type="entry name" value="Bac_DnaA_C"/>
    <property type="match status" value="1"/>
</dbReference>
<dbReference type="Pfam" id="PF11638">
    <property type="entry name" value="DnaA_N"/>
    <property type="match status" value="1"/>
</dbReference>
<dbReference type="PRINTS" id="PR00051">
    <property type="entry name" value="DNAA"/>
</dbReference>
<dbReference type="SMART" id="SM00382">
    <property type="entry name" value="AAA"/>
    <property type="match status" value="1"/>
</dbReference>
<dbReference type="SMART" id="SM00760">
    <property type="entry name" value="Bac_DnaA_C"/>
    <property type="match status" value="1"/>
</dbReference>
<dbReference type="SUPFAM" id="SSF52540">
    <property type="entry name" value="P-loop containing nucleoside triphosphate hydrolases"/>
    <property type="match status" value="1"/>
</dbReference>
<dbReference type="SUPFAM" id="SSF48295">
    <property type="entry name" value="TrpR-like"/>
    <property type="match status" value="1"/>
</dbReference>
<dbReference type="PROSITE" id="PS01008">
    <property type="entry name" value="DNAA"/>
    <property type="match status" value="1"/>
</dbReference>
<keyword id="KW-0067">ATP-binding</keyword>
<keyword id="KW-0963">Cytoplasm</keyword>
<keyword id="KW-0235">DNA replication</keyword>
<keyword id="KW-0238">DNA-binding</keyword>
<keyword id="KW-0446">Lipid-binding</keyword>
<keyword id="KW-0547">Nucleotide-binding</keyword>
<reference key="1">
    <citation type="submission" date="2009-06" db="EMBL/GenBank/DDBJ databases">
        <title>Complete sequence of chromosome of Geopacillus sp. WCH70.</title>
        <authorList>
            <consortium name="US DOE Joint Genome Institute"/>
            <person name="Lucas S."/>
            <person name="Copeland A."/>
            <person name="Lapidus A."/>
            <person name="Glavina del Rio T."/>
            <person name="Dalin E."/>
            <person name="Tice H."/>
            <person name="Bruce D."/>
            <person name="Goodwin L."/>
            <person name="Pitluck S."/>
            <person name="Chertkov O."/>
            <person name="Brettin T."/>
            <person name="Detter J.C."/>
            <person name="Han C."/>
            <person name="Larimer F."/>
            <person name="Land M."/>
            <person name="Hauser L."/>
            <person name="Kyrpides N."/>
            <person name="Mikhailova N."/>
            <person name="Brumm P."/>
            <person name="Mead D.A."/>
            <person name="Richardson P."/>
        </authorList>
    </citation>
    <scope>NUCLEOTIDE SEQUENCE [LARGE SCALE GENOMIC DNA]</scope>
    <source>
        <strain>WCH70</strain>
    </source>
</reference>
<evidence type="ECO:0000255" key="1">
    <source>
        <dbReference type="HAMAP-Rule" id="MF_00377"/>
    </source>
</evidence>
<organism>
    <name type="scientific">Geobacillus sp. (strain WCH70)</name>
    <dbReference type="NCBI Taxonomy" id="471223"/>
    <lineage>
        <taxon>Bacteria</taxon>
        <taxon>Bacillati</taxon>
        <taxon>Bacillota</taxon>
        <taxon>Bacilli</taxon>
        <taxon>Bacillales</taxon>
        <taxon>Anoxybacillaceae</taxon>
        <taxon>Geobacillus</taxon>
    </lineage>
</organism>
<accession>C5D327</accession>
<protein>
    <recommendedName>
        <fullName evidence="1">Chromosomal replication initiator protein DnaA</fullName>
    </recommendedName>
</protein>
<proteinExistence type="inferred from homology"/>